<evidence type="ECO:0000255" key="1">
    <source>
        <dbReference type="HAMAP-Rule" id="MF_00254"/>
    </source>
</evidence>
<comment type="catalytic activity">
    <reaction evidence="1">
        <text>tRNA(Gly) + glycine + ATP = glycyl-tRNA(Gly) + AMP + diphosphate</text>
        <dbReference type="Rhea" id="RHEA:16013"/>
        <dbReference type="Rhea" id="RHEA-COMP:9664"/>
        <dbReference type="Rhea" id="RHEA-COMP:9683"/>
        <dbReference type="ChEBI" id="CHEBI:30616"/>
        <dbReference type="ChEBI" id="CHEBI:33019"/>
        <dbReference type="ChEBI" id="CHEBI:57305"/>
        <dbReference type="ChEBI" id="CHEBI:78442"/>
        <dbReference type="ChEBI" id="CHEBI:78522"/>
        <dbReference type="ChEBI" id="CHEBI:456215"/>
        <dbReference type="EC" id="6.1.1.14"/>
    </reaction>
</comment>
<comment type="subunit">
    <text evidence="1">Tetramer of two alpha and two beta subunits.</text>
</comment>
<comment type="subcellular location">
    <subcellularLocation>
        <location evidence="1">Cytoplasm</location>
    </subcellularLocation>
</comment>
<comment type="similarity">
    <text evidence="1">Belongs to the class-II aminoacyl-tRNA synthetase family.</text>
</comment>
<dbReference type="EC" id="6.1.1.14" evidence="1"/>
<dbReference type="EMBL" id="CP001011">
    <property type="protein sequence ID" value="ACB92323.1"/>
    <property type="molecule type" value="Genomic_DNA"/>
</dbReference>
<dbReference type="RefSeq" id="WP_004085463.1">
    <property type="nucleotide sequence ID" value="NC_010577.1"/>
</dbReference>
<dbReference type="SMR" id="B2I4M8"/>
<dbReference type="GeneID" id="93904626"/>
<dbReference type="KEGG" id="xfn:XfasM23_0888"/>
<dbReference type="HOGENOM" id="CLU_057066_1_0_6"/>
<dbReference type="Proteomes" id="UP000001698">
    <property type="component" value="Chromosome"/>
</dbReference>
<dbReference type="GO" id="GO:0005829">
    <property type="term" value="C:cytosol"/>
    <property type="evidence" value="ECO:0007669"/>
    <property type="project" value="TreeGrafter"/>
</dbReference>
<dbReference type="GO" id="GO:0005524">
    <property type="term" value="F:ATP binding"/>
    <property type="evidence" value="ECO:0007669"/>
    <property type="project" value="UniProtKB-UniRule"/>
</dbReference>
<dbReference type="GO" id="GO:0004820">
    <property type="term" value="F:glycine-tRNA ligase activity"/>
    <property type="evidence" value="ECO:0007669"/>
    <property type="project" value="UniProtKB-UniRule"/>
</dbReference>
<dbReference type="GO" id="GO:0006426">
    <property type="term" value="P:glycyl-tRNA aminoacylation"/>
    <property type="evidence" value="ECO:0007669"/>
    <property type="project" value="UniProtKB-UniRule"/>
</dbReference>
<dbReference type="CDD" id="cd00733">
    <property type="entry name" value="GlyRS_alpha_core"/>
    <property type="match status" value="1"/>
</dbReference>
<dbReference type="FunFam" id="3.30.930.10:FF:000006">
    <property type="entry name" value="Glycine--tRNA ligase alpha subunit"/>
    <property type="match status" value="1"/>
</dbReference>
<dbReference type="Gene3D" id="3.30.930.10">
    <property type="entry name" value="Bira Bifunctional Protein, Domain 2"/>
    <property type="match status" value="1"/>
</dbReference>
<dbReference type="Gene3D" id="1.20.58.180">
    <property type="entry name" value="Class II aaRS and biotin synthetases, domain 2"/>
    <property type="match status" value="1"/>
</dbReference>
<dbReference type="HAMAP" id="MF_00254">
    <property type="entry name" value="Gly_tRNA_synth_alpha"/>
    <property type="match status" value="1"/>
</dbReference>
<dbReference type="InterPro" id="IPR045864">
    <property type="entry name" value="aa-tRNA-synth_II/BPL/LPL"/>
</dbReference>
<dbReference type="InterPro" id="IPR006194">
    <property type="entry name" value="Gly-tRNA-synth_heterodimer"/>
</dbReference>
<dbReference type="InterPro" id="IPR002310">
    <property type="entry name" value="Gly-tRNA_ligase_asu"/>
</dbReference>
<dbReference type="NCBIfam" id="TIGR00388">
    <property type="entry name" value="glyQ"/>
    <property type="match status" value="1"/>
</dbReference>
<dbReference type="NCBIfam" id="NF006827">
    <property type="entry name" value="PRK09348.1"/>
    <property type="match status" value="1"/>
</dbReference>
<dbReference type="PANTHER" id="PTHR30075:SF2">
    <property type="entry name" value="GLYCINE--TRNA LIGASE, CHLOROPLASTIC_MITOCHONDRIAL 2"/>
    <property type="match status" value="1"/>
</dbReference>
<dbReference type="PANTHER" id="PTHR30075">
    <property type="entry name" value="GLYCYL-TRNA SYNTHETASE"/>
    <property type="match status" value="1"/>
</dbReference>
<dbReference type="Pfam" id="PF02091">
    <property type="entry name" value="tRNA-synt_2e"/>
    <property type="match status" value="1"/>
</dbReference>
<dbReference type="PRINTS" id="PR01044">
    <property type="entry name" value="TRNASYNTHGA"/>
</dbReference>
<dbReference type="SUPFAM" id="SSF55681">
    <property type="entry name" value="Class II aaRS and biotin synthetases"/>
    <property type="match status" value="1"/>
</dbReference>
<dbReference type="PROSITE" id="PS50861">
    <property type="entry name" value="AA_TRNA_LIGASE_II_GLYAB"/>
    <property type="match status" value="1"/>
</dbReference>
<protein>
    <recommendedName>
        <fullName evidence="1">Glycine--tRNA ligase alpha subunit</fullName>
        <ecNumber evidence="1">6.1.1.14</ecNumber>
    </recommendedName>
    <alternativeName>
        <fullName evidence="1">Glycyl-tRNA synthetase alpha subunit</fullName>
        <shortName evidence="1">GlyRS</shortName>
    </alternativeName>
</protein>
<reference key="1">
    <citation type="journal article" date="2010" name="J. Bacteriol.">
        <title>Whole genome sequences of two Xylella fastidiosa strains (M12 and M23) causing almond leaf scorch disease in California.</title>
        <authorList>
            <person name="Chen J."/>
            <person name="Xie G."/>
            <person name="Han S."/>
            <person name="Chertkov O."/>
            <person name="Sims D."/>
            <person name="Civerolo E.L."/>
        </authorList>
    </citation>
    <scope>NUCLEOTIDE SEQUENCE [LARGE SCALE GENOMIC DNA]</scope>
    <source>
        <strain>M23</strain>
    </source>
</reference>
<name>SYGA_XYLF2</name>
<accession>B2I4M8</accession>
<sequence>MSDSRGVLSISTSTTFQGLIQTLNRYWAEQGCVLVQPLDLEVGAGTFHPATFLRALGPEPWNAAYVQPSRRPTDGRYGENPNRLQRYYQYQVAMKPNPDNLQELYLASLQALGIDPLVHDVRFVEDNWESPTLGAWGLGWEVWLNGMEVTQFTYFQQAGGLECKPVLGEVTYGLERLCMYLQSCDNVYDLVWTYGPDGTPVTYGDVYHQNEVEQSAYNFEHANVTELLHTFDACEREAKSLVEAVLPLPAYEKVIKASHCFNLLDARRTISVTERQRYILRIRTLSQEVAKAYYAQREKLGFPNLRR</sequence>
<feature type="chain" id="PRO_1000101247" description="Glycine--tRNA ligase alpha subunit">
    <location>
        <begin position="1"/>
        <end position="307"/>
    </location>
</feature>
<keyword id="KW-0030">Aminoacyl-tRNA synthetase</keyword>
<keyword id="KW-0067">ATP-binding</keyword>
<keyword id="KW-0963">Cytoplasm</keyword>
<keyword id="KW-0436">Ligase</keyword>
<keyword id="KW-0547">Nucleotide-binding</keyword>
<keyword id="KW-0648">Protein biosynthesis</keyword>
<proteinExistence type="inferred from homology"/>
<gene>
    <name evidence="1" type="primary">glyQ</name>
    <name type="ordered locus">XfasM23_0888</name>
</gene>
<organism>
    <name type="scientific">Xylella fastidiosa (strain M23)</name>
    <dbReference type="NCBI Taxonomy" id="405441"/>
    <lineage>
        <taxon>Bacteria</taxon>
        <taxon>Pseudomonadati</taxon>
        <taxon>Pseudomonadota</taxon>
        <taxon>Gammaproteobacteria</taxon>
        <taxon>Lysobacterales</taxon>
        <taxon>Lysobacteraceae</taxon>
        <taxon>Xylella</taxon>
    </lineage>
</organism>